<comment type="function">
    <molecule>Gasdermin-C</molecule>
    <text evidence="2">This form constitutes the precursor of the pore-forming protein: upon cleavage, the released N-terminal moiety (Gasdermin-C, N-terminal) binds to membranes and forms pores, triggering pyroptosis.</text>
</comment>
<comment type="function">
    <molecule>Gasdermin-C, N-terminal</molecule>
    <text evidence="2">Pore-forming protein that causes membrane permeabilization and pyroptosis. Produced by the cleavage of gasdermin-C by caspase CASP8 in response to death signals. After cleavage, moves to the plasma membrane where it strongly binds to membrane inner leaflet lipids. Homooligomerizes within the membrane and forms pores of 10-15 nanometers (nm) of inner diameter, triggering pyroptosis.</text>
</comment>
<comment type="activity regulation">
    <molecule>Gasdermin-C</molecule>
    <text evidence="2">The full-length protein before cleavage is inactive: intramolecular interactions between N- and C-terminal domains mediate autoinhibition in the absence of activation signal. The intrinsic pyroptosis-inducing activity is carried by the released N-terminal moiety (Gasdermin-C, N-terminal) following cleavage by caspase CASP8.</text>
</comment>
<comment type="subunit">
    <molecule>Gasdermin-C, N-terminal</molecule>
    <text evidence="1">Homooligomer; homooligomeric ring-shaped pore complex containing 27-28 subunits when inserted in the membrane.</text>
</comment>
<comment type="subcellular location">
    <molecule>Gasdermin-C</molecule>
    <subcellularLocation>
        <location evidence="2">Cytoplasm</location>
        <location evidence="2">Cytosol</location>
    </subcellularLocation>
</comment>
<comment type="subcellular location">
    <molecule>Gasdermin-C, N-terminal</molecule>
    <subcellularLocation>
        <location evidence="1">Cell membrane</location>
        <topology evidence="1">Multi-pass membrane protein</topology>
    </subcellularLocation>
</comment>
<comment type="domain">
    <text evidence="1">Intramolecular interactions between N- and C-terminal domains are important for autoinhibition in the absence of activation signal. The intrinsic pyroptosis-inducing activity is carried by the N-terminal domain.</text>
</comment>
<comment type="PTM">
    <text evidence="2">Cleavage by CASP8 relieves autoinhibition by releasing the N-terminal moiety (Gasdermin-C, N-terminal) that initiates pyroptosis.</text>
</comment>
<comment type="PTM">
    <text evidence="2">Palmitoylated.</text>
</comment>
<comment type="similarity">
    <text evidence="4">Belongs to the gasdermin family.</text>
</comment>
<sequence length="474" mass="53252">MLYTFDQVSKDVVKKLQGKDLRPVRCLSDATKFRQFDILQKTPQSLFFKSEDTPVGYSLLQILEPNFPVPETEVSAPMPLKHITSQKWKADVDVKATIADGGASAEFVQSCGYDIEVQSRSIPDSKLESLQNRQGPWGKLLDKKLSFVTDCQMGRNNLYVVTEVFEVTKDTVVQGSSSIDLSGKALVSQLVKGEAQGQWQRETTDLVPIPKGAVLAYKKKQLVIENNTCAILLSANAKKKTFPGIFNFGMSSRSQTMEIVNSSWIDYIPPIGRIEEPVHLDFKYLEKEVFLRKEQLAMLSKDVQDVVFSNLLPMLSDSDVLFDLINMLELDQLGHMDGPAGLILDELRKNSSTPWIDLKGLILYLLQALMVLSDTQLDLLAQSMEMRILLQQRELVRSILEPNFKYPWNIPFTLQPQLLAPLQGEGLAITYELLKGCGLKMEPNSPRSTWDLEAKMPLSALYGILSCLQQLVEA</sequence>
<proteinExistence type="inferred from homology"/>
<name>GSDMC_RAT</name>
<gene>
    <name evidence="5" type="primary">Gsdmc</name>
</gene>
<reference evidence="4" key="1">
    <citation type="journal article" date="2004" name="Nature">
        <title>Genome sequence of the Brown Norway rat yields insights into mammalian evolution.</title>
        <authorList>
            <person name="Gibbs R.A."/>
            <person name="Weinstock G.M."/>
            <person name="Metzker M.L."/>
            <person name="Muzny D.M."/>
            <person name="Sodergren E.J."/>
            <person name="Scherer S."/>
            <person name="Scott G."/>
            <person name="Steffen D."/>
            <person name="Worley K.C."/>
            <person name="Burch P.E."/>
            <person name="Okwuonu G."/>
            <person name="Hines S."/>
            <person name="Lewis L."/>
            <person name="Deramo C."/>
            <person name="Delgado O."/>
            <person name="Dugan-Rocha S."/>
            <person name="Miner G."/>
            <person name="Morgan M."/>
            <person name="Hawes A."/>
            <person name="Gill R."/>
            <person name="Holt R.A."/>
            <person name="Adams M.D."/>
            <person name="Amanatides P.G."/>
            <person name="Baden-Tillson H."/>
            <person name="Barnstead M."/>
            <person name="Chin S."/>
            <person name="Evans C.A."/>
            <person name="Ferriera S."/>
            <person name="Fosler C."/>
            <person name="Glodek A."/>
            <person name="Gu Z."/>
            <person name="Jennings D."/>
            <person name="Kraft C.L."/>
            <person name="Nguyen T."/>
            <person name="Pfannkoch C.M."/>
            <person name="Sitter C."/>
            <person name="Sutton G.G."/>
            <person name="Venter J.C."/>
            <person name="Woodage T."/>
            <person name="Smith D."/>
            <person name="Lee H.-M."/>
            <person name="Gustafson E."/>
            <person name="Cahill P."/>
            <person name="Kana A."/>
            <person name="Doucette-Stamm L."/>
            <person name="Weinstock K."/>
            <person name="Fechtel K."/>
            <person name="Weiss R.B."/>
            <person name="Dunn D.M."/>
            <person name="Green E.D."/>
            <person name="Blakesley R.W."/>
            <person name="Bouffard G.G."/>
            <person name="De Jong P.J."/>
            <person name="Osoegawa K."/>
            <person name="Zhu B."/>
            <person name="Marra M."/>
            <person name="Schein J."/>
            <person name="Bosdet I."/>
            <person name="Fjell C."/>
            <person name="Jones S."/>
            <person name="Krzywinski M."/>
            <person name="Mathewson C."/>
            <person name="Siddiqui A."/>
            <person name="Wye N."/>
            <person name="McPherson J."/>
            <person name="Zhao S."/>
            <person name="Fraser C.M."/>
            <person name="Shetty J."/>
            <person name="Shatsman S."/>
            <person name="Geer K."/>
            <person name="Chen Y."/>
            <person name="Abramzon S."/>
            <person name="Nierman W.C."/>
            <person name="Havlak P.H."/>
            <person name="Chen R."/>
            <person name="Durbin K.J."/>
            <person name="Egan A."/>
            <person name="Ren Y."/>
            <person name="Song X.-Z."/>
            <person name="Li B."/>
            <person name="Liu Y."/>
            <person name="Qin X."/>
            <person name="Cawley S."/>
            <person name="Cooney A.J."/>
            <person name="D'Souza L.M."/>
            <person name="Martin K."/>
            <person name="Wu J.Q."/>
            <person name="Gonzalez-Garay M.L."/>
            <person name="Jackson A.R."/>
            <person name="Kalafus K.J."/>
            <person name="McLeod M.P."/>
            <person name="Milosavljevic A."/>
            <person name="Virk D."/>
            <person name="Volkov A."/>
            <person name="Wheeler D.A."/>
            <person name="Zhang Z."/>
            <person name="Bailey J.A."/>
            <person name="Eichler E.E."/>
            <person name="Tuzun E."/>
            <person name="Birney E."/>
            <person name="Mongin E."/>
            <person name="Ureta-Vidal A."/>
            <person name="Woodwark C."/>
            <person name="Zdobnov E."/>
            <person name="Bork P."/>
            <person name="Suyama M."/>
            <person name="Torrents D."/>
            <person name="Alexandersson M."/>
            <person name="Trask B.J."/>
            <person name="Young J.M."/>
            <person name="Huang H."/>
            <person name="Wang H."/>
            <person name="Xing H."/>
            <person name="Daniels S."/>
            <person name="Gietzen D."/>
            <person name="Schmidt J."/>
            <person name="Stevens K."/>
            <person name="Vitt U."/>
            <person name="Wingrove J."/>
            <person name="Camara F."/>
            <person name="Mar Alba M."/>
            <person name="Abril J.F."/>
            <person name="Guigo R."/>
            <person name="Smit A."/>
            <person name="Dubchak I."/>
            <person name="Rubin E.M."/>
            <person name="Couronne O."/>
            <person name="Poliakov A."/>
            <person name="Huebner N."/>
            <person name="Ganten D."/>
            <person name="Goesele C."/>
            <person name="Hummel O."/>
            <person name="Kreitler T."/>
            <person name="Lee Y.-A."/>
            <person name="Monti J."/>
            <person name="Schulz H."/>
            <person name="Zimdahl H."/>
            <person name="Himmelbauer H."/>
            <person name="Lehrach H."/>
            <person name="Jacob H.J."/>
            <person name="Bromberg S."/>
            <person name="Gullings-Handley J."/>
            <person name="Jensen-Seaman M.I."/>
            <person name="Kwitek A.E."/>
            <person name="Lazar J."/>
            <person name="Pasko D."/>
            <person name="Tonellato P.J."/>
            <person name="Twigger S."/>
            <person name="Ponting C.P."/>
            <person name="Duarte J.M."/>
            <person name="Rice S."/>
            <person name="Goodstadt L."/>
            <person name="Beatson S.A."/>
            <person name="Emes R.D."/>
            <person name="Winter E.E."/>
            <person name="Webber C."/>
            <person name="Brandt P."/>
            <person name="Nyakatura G."/>
            <person name="Adetobi M."/>
            <person name="Chiaromonte F."/>
            <person name="Elnitski L."/>
            <person name="Eswara P."/>
            <person name="Hardison R.C."/>
            <person name="Hou M."/>
            <person name="Kolbe D."/>
            <person name="Makova K."/>
            <person name="Miller W."/>
            <person name="Nekrutenko A."/>
            <person name="Riemer C."/>
            <person name="Schwartz S."/>
            <person name="Taylor J."/>
            <person name="Yang S."/>
            <person name="Zhang Y."/>
            <person name="Lindpaintner K."/>
            <person name="Andrews T.D."/>
            <person name="Caccamo M."/>
            <person name="Clamp M."/>
            <person name="Clarke L."/>
            <person name="Curwen V."/>
            <person name="Durbin R.M."/>
            <person name="Eyras E."/>
            <person name="Searle S.M."/>
            <person name="Cooper G.M."/>
            <person name="Batzoglou S."/>
            <person name="Brudno M."/>
            <person name="Sidow A."/>
            <person name="Stone E.A."/>
            <person name="Payseur B.A."/>
            <person name="Bourque G."/>
            <person name="Lopez-Otin C."/>
            <person name="Puente X.S."/>
            <person name="Chakrabarti K."/>
            <person name="Chatterji S."/>
            <person name="Dewey C."/>
            <person name="Pachter L."/>
            <person name="Bray N."/>
            <person name="Yap V.B."/>
            <person name="Caspi A."/>
            <person name="Tesler G."/>
            <person name="Pevzner P.A."/>
            <person name="Haussler D."/>
            <person name="Roskin K.M."/>
            <person name="Baertsch R."/>
            <person name="Clawson H."/>
            <person name="Furey T.S."/>
            <person name="Hinrichs A.S."/>
            <person name="Karolchik D."/>
            <person name="Kent W.J."/>
            <person name="Rosenbloom K.R."/>
            <person name="Trumbower H."/>
            <person name="Weirauch M."/>
            <person name="Cooper D.N."/>
            <person name="Stenson P.D."/>
            <person name="Ma B."/>
            <person name="Brent M."/>
            <person name="Arumugam M."/>
            <person name="Shteynberg D."/>
            <person name="Copley R.R."/>
            <person name="Taylor M.S."/>
            <person name="Riethman H."/>
            <person name="Mudunuri U."/>
            <person name="Peterson J."/>
            <person name="Guyer M."/>
            <person name="Felsenfeld A."/>
            <person name="Old S."/>
            <person name="Mockrin S."/>
            <person name="Collins F.S."/>
        </authorList>
    </citation>
    <scope>NUCLEOTIDE SEQUENCE [LARGE SCALE GENOMIC DNA]</scope>
    <source>
        <strain evidence="3">Brown Norway</strain>
    </source>
</reference>
<keyword id="KW-1003">Cell membrane</keyword>
<keyword id="KW-0963">Cytoplasm</keyword>
<keyword id="KW-0449">Lipoprotein</keyword>
<keyword id="KW-0472">Membrane</keyword>
<keyword id="KW-1210">Necrosis</keyword>
<keyword id="KW-0564">Palmitate</keyword>
<keyword id="KW-1185">Reference proteome</keyword>
<keyword id="KW-0812">Transmembrane</keyword>
<keyword id="KW-1134">Transmembrane beta strand</keyword>
<feature type="chain" id="PRO_0000349130" description="Gasdermin-C">
    <location>
        <begin position="1"/>
        <end position="474"/>
    </location>
</feature>
<feature type="chain" id="PRO_0000451684" description="Gasdermin-C, N-terminal" evidence="4">
    <location>
        <begin position="1"/>
        <end status="unknown"/>
    </location>
</feature>
<feature type="chain" id="PRO_0000451685" description="Gasdermin-C, C-terminal" evidence="4">
    <location>
        <begin status="unknown"/>
        <end position="474"/>
    </location>
</feature>
<feature type="region of interest" description="Triggers pyroptosis" evidence="2">
    <location>
        <begin position="1"/>
        <end position="237"/>
    </location>
</feature>
<dbReference type="EMBL" id="AABR03055675">
    <property type="status" value="NOT_ANNOTATED_CDS"/>
    <property type="molecule type" value="Genomic_DNA"/>
</dbReference>
<dbReference type="SMR" id="P85967"/>
<dbReference type="FunCoup" id="P85967">
    <property type="interactions" value="1"/>
</dbReference>
<dbReference type="STRING" id="10116.ENSRNOP00000072537"/>
<dbReference type="PhosphoSitePlus" id="P85967"/>
<dbReference type="PaxDb" id="10116-ENSRNOP00000041988"/>
<dbReference type="UCSC" id="RGD:1308989">
    <property type="organism name" value="rat"/>
</dbReference>
<dbReference type="AGR" id="RGD:1308989"/>
<dbReference type="RGD" id="1308989">
    <property type="gene designation" value="Gsdmc"/>
</dbReference>
<dbReference type="eggNOG" id="ENOG502S0IQ">
    <property type="taxonomic scope" value="Eukaryota"/>
</dbReference>
<dbReference type="InParanoid" id="P85967"/>
<dbReference type="PhylomeDB" id="P85967"/>
<dbReference type="TreeFam" id="TF331886"/>
<dbReference type="PRO" id="PR:P85967"/>
<dbReference type="Proteomes" id="UP000002494">
    <property type="component" value="Unplaced"/>
</dbReference>
<dbReference type="GO" id="GO:0005737">
    <property type="term" value="C:cytoplasm"/>
    <property type="evidence" value="ECO:0000250"/>
    <property type="project" value="UniProtKB"/>
</dbReference>
<dbReference type="GO" id="GO:0005829">
    <property type="term" value="C:cytosol"/>
    <property type="evidence" value="ECO:0007669"/>
    <property type="project" value="UniProtKB-SubCell"/>
</dbReference>
<dbReference type="GO" id="GO:0005886">
    <property type="term" value="C:plasma membrane"/>
    <property type="evidence" value="ECO:0007669"/>
    <property type="project" value="UniProtKB-SubCell"/>
</dbReference>
<dbReference type="GO" id="GO:0005546">
    <property type="term" value="F:phosphatidylinositol-4,5-bisphosphate binding"/>
    <property type="evidence" value="ECO:0000318"/>
    <property type="project" value="GO_Central"/>
</dbReference>
<dbReference type="GO" id="GO:0070273">
    <property type="term" value="F:phosphatidylinositol-4-phosphate binding"/>
    <property type="evidence" value="ECO:0000318"/>
    <property type="project" value="GO_Central"/>
</dbReference>
<dbReference type="GO" id="GO:0001786">
    <property type="term" value="F:phosphatidylserine binding"/>
    <property type="evidence" value="ECO:0000318"/>
    <property type="project" value="GO_Central"/>
</dbReference>
<dbReference type="GO" id="GO:0042742">
    <property type="term" value="P:defense response to bacterium"/>
    <property type="evidence" value="ECO:0000318"/>
    <property type="project" value="GO_Central"/>
</dbReference>
<dbReference type="GO" id="GO:0012501">
    <property type="term" value="P:programmed cell death"/>
    <property type="evidence" value="ECO:0007669"/>
    <property type="project" value="UniProtKB-KW"/>
</dbReference>
<dbReference type="GO" id="GO:0070269">
    <property type="term" value="P:pyroptotic inflammatory response"/>
    <property type="evidence" value="ECO:0000318"/>
    <property type="project" value="GO_Central"/>
</dbReference>
<dbReference type="InterPro" id="IPR007677">
    <property type="entry name" value="Gasdermin"/>
</dbReference>
<dbReference type="InterPro" id="IPR040460">
    <property type="entry name" value="Gasdermin_pore"/>
</dbReference>
<dbReference type="InterPro" id="IPR041263">
    <property type="entry name" value="Gasdermin_PUB"/>
</dbReference>
<dbReference type="PANTHER" id="PTHR16399">
    <property type="entry name" value="GASDERMIN"/>
    <property type="match status" value="1"/>
</dbReference>
<dbReference type="PANTHER" id="PTHR16399:SF21">
    <property type="entry name" value="GASDERMIN-C"/>
    <property type="match status" value="1"/>
</dbReference>
<dbReference type="Pfam" id="PF04598">
    <property type="entry name" value="Gasdermin"/>
    <property type="match status" value="1"/>
</dbReference>
<dbReference type="Pfam" id="PF17708">
    <property type="entry name" value="Gasdermin_C"/>
    <property type="match status" value="1"/>
</dbReference>
<accession>P85967</accession>
<organism>
    <name type="scientific">Rattus norvegicus</name>
    <name type="common">Rat</name>
    <dbReference type="NCBI Taxonomy" id="10116"/>
    <lineage>
        <taxon>Eukaryota</taxon>
        <taxon>Metazoa</taxon>
        <taxon>Chordata</taxon>
        <taxon>Craniata</taxon>
        <taxon>Vertebrata</taxon>
        <taxon>Euteleostomi</taxon>
        <taxon>Mammalia</taxon>
        <taxon>Eutheria</taxon>
        <taxon>Euarchontoglires</taxon>
        <taxon>Glires</taxon>
        <taxon>Rodentia</taxon>
        <taxon>Myomorpha</taxon>
        <taxon>Muroidea</taxon>
        <taxon>Muridae</taxon>
        <taxon>Murinae</taxon>
        <taxon>Rattus</taxon>
    </lineage>
</organism>
<evidence type="ECO:0000250" key="1">
    <source>
        <dbReference type="UniProtKB" id="Q5Y4Y6"/>
    </source>
</evidence>
<evidence type="ECO:0000250" key="2">
    <source>
        <dbReference type="UniProtKB" id="Q9BYG8"/>
    </source>
</evidence>
<evidence type="ECO:0000269" key="3">
    <source>
    </source>
</evidence>
<evidence type="ECO:0000305" key="4"/>
<evidence type="ECO:0000312" key="5">
    <source>
        <dbReference type="RGD" id="1308989"/>
    </source>
</evidence>
<protein>
    <recommendedName>
        <fullName>Gasdermin-C</fullName>
    </recommendedName>
    <component>
        <recommendedName>
            <fullName evidence="4">Gasdermin-C, N-terminal</fullName>
            <shortName evidence="4">GSDMC-NT</shortName>
        </recommendedName>
    </component>
    <component>
        <recommendedName>
            <fullName evidence="4">Gasdermin-C, C-terminal</fullName>
            <shortName evidence="4">GSDMC-CT</shortName>
        </recommendedName>
    </component>
</protein>